<dbReference type="EC" id="6.3.4.16" evidence="2"/>
<dbReference type="EC" id="6.3.5.5" evidence="2"/>
<dbReference type="EMBL" id="U81259">
    <property type="protein sequence ID" value="AAB39252.1"/>
    <property type="molecule type" value="Genomic_DNA"/>
</dbReference>
<dbReference type="EMBL" id="AE004091">
    <property type="protein sequence ID" value="AAG08142.1"/>
    <property type="molecule type" value="Genomic_DNA"/>
</dbReference>
<dbReference type="EMBL" id="U04992">
    <property type="protein sequence ID" value="AAA19048.1"/>
    <property type="molecule type" value="Unassigned_DNA"/>
</dbReference>
<dbReference type="EMBL" id="M33818">
    <property type="protein sequence ID" value="AAA25764.1"/>
    <property type="molecule type" value="Genomic_DNA"/>
</dbReference>
<dbReference type="PIR" id="D55580">
    <property type="entry name" value="D55580"/>
</dbReference>
<dbReference type="PIR" id="E83051">
    <property type="entry name" value="E83051"/>
</dbReference>
<dbReference type="RefSeq" id="NP_253444.1">
    <property type="nucleotide sequence ID" value="NC_002516.2"/>
</dbReference>
<dbReference type="RefSeq" id="WP_003095207.1">
    <property type="nucleotide sequence ID" value="NZ_QZGE01000018.1"/>
</dbReference>
<dbReference type="SMR" id="P38100"/>
<dbReference type="FunCoup" id="P38100">
    <property type="interactions" value="741"/>
</dbReference>
<dbReference type="STRING" id="208964.PA4756"/>
<dbReference type="PaxDb" id="208964-PA4756"/>
<dbReference type="GeneID" id="881743"/>
<dbReference type="KEGG" id="pae:PA4756"/>
<dbReference type="PATRIC" id="fig|208964.12.peg.4982"/>
<dbReference type="PseudoCAP" id="PA4756"/>
<dbReference type="HOGENOM" id="CLU_000513_1_0_6"/>
<dbReference type="InParanoid" id="P38100"/>
<dbReference type="OrthoDB" id="9804197at2"/>
<dbReference type="PhylomeDB" id="P38100"/>
<dbReference type="BioCyc" id="PAER208964:G1FZ6-4868-MONOMER"/>
<dbReference type="UniPathway" id="UPA00068">
    <property type="reaction ID" value="UER00171"/>
</dbReference>
<dbReference type="UniPathway" id="UPA00070">
    <property type="reaction ID" value="UER00115"/>
</dbReference>
<dbReference type="Proteomes" id="UP000002438">
    <property type="component" value="Chromosome"/>
</dbReference>
<dbReference type="GO" id="GO:0005737">
    <property type="term" value="C:cytoplasm"/>
    <property type="evidence" value="ECO:0000318"/>
    <property type="project" value="GO_Central"/>
</dbReference>
<dbReference type="GO" id="GO:0005524">
    <property type="term" value="F:ATP binding"/>
    <property type="evidence" value="ECO:0007669"/>
    <property type="project" value="UniProtKB-UniRule"/>
</dbReference>
<dbReference type="GO" id="GO:0004087">
    <property type="term" value="F:carbamoyl-phosphate synthase (ammonia) activity"/>
    <property type="evidence" value="ECO:0007669"/>
    <property type="project" value="RHEA"/>
</dbReference>
<dbReference type="GO" id="GO:0004088">
    <property type="term" value="F:carbamoyl-phosphate synthase (glutamine-hydrolyzing) activity"/>
    <property type="evidence" value="ECO:0000314"/>
    <property type="project" value="PseudoCAP"/>
</dbReference>
<dbReference type="GO" id="GO:0046872">
    <property type="term" value="F:metal ion binding"/>
    <property type="evidence" value="ECO:0007669"/>
    <property type="project" value="UniProtKB-KW"/>
</dbReference>
<dbReference type="GO" id="GO:0044205">
    <property type="term" value="P:'de novo' UMP biosynthetic process"/>
    <property type="evidence" value="ECO:0007669"/>
    <property type="project" value="UniProtKB-UniRule"/>
</dbReference>
<dbReference type="GO" id="GO:0071230">
    <property type="term" value="P:cellular response to amino acid stimulus"/>
    <property type="evidence" value="ECO:0000314"/>
    <property type="project" value="PseudoCAP"/>
</dbReference>
<dbReference type="GO" id="GO:0006536">
    <property type="term" value="P:glutamate metabolic process"/>
    <property type="evidence" value="ECO:0000314"/>
    <property type="project" value="PseudoCAP"/>
</dbReference>
<dbReference type="GO" id="GO:0006541">
    <property type="term" value="P:glutamine metabolic process"/>
    <property type="evidence" value="ECO:0000318"/>
    <property type="project" value="GO_Central"/>
</dbReference>
<dbReference type="GO" id="GO:0006526">
    <property type="term" value="P:L-arginine biosynthetic process"/>
    <property type="evidence" value="ECO:0007669"/>
    <property type="project" value="UniProtKB-UniRule"/>
</dbReference>
<dbReference type="CDD" id="cd01424">
    <property type="entry name" value="MGS_CPS_II"/>
    <property type="match status" value="1"/>
</dbReference>
<dbReference type="FunFam" id="1.10.1030.10:FF:000002">
    <property type="entry name" value="Carbamoyl-phosphate synthase large chain"/>
    <property type="match status" value="1"/>
</dbReference>
<dbReference type="FunFam" id="3.30.1490.20:FF:000001">
    <property type="entry name" value="Carbamoyl-phosphate synthase large chain"/>
    <property type="match status" value="1"/>
</dbReference>
<dbReference type="FunFam" id="3.30.470.20:FF:000007">
    <property type="entry name" value="Carbamoyl-phosphate synthase large chain"/>
    <property type="match status" value="1"/>
</dbReference>
<dbReference type="FunFam" id="3.30.470.20:FF:000013">
    <property type="entry name" value="Carbamoyl-phosphate synthase large chain"/>
    <property type="match status" value="1"/>
</dbReference>
<dbReference type="FunFam" id="3.40.50.1380:FF:000004">
    <property type="entry name" value="Carbamoyl-phosphate synthase large chain"/>
    <property type="match status" value="1"/>
</dbReference>
<dbReference type="FunFam" id="3.40.50.20:FF:000001">
    <property type="entry name" value="Carbamoyl-phosphate synthase large chain"/>
    <property type="match status" value="1"/>
</dbReference>
<dbReference type="FunFam" id="3.40.50.20:FF:000003">
    <property type="entry name" value="Carbamoyl-phosphate synthase large chain"/>
    <property type="match status" value="1"/>
</dbReference>
<dbReference type="Gene3D" id="3.40.50.20">
    <property type="match status" value="2"/>
</dbReference>
<dbReference type="Gene3D" id="3.30.470.20">
    <property type="entry name" value="ATP-grasp fold, B domain"/>
    <property type="match status" value="2"/>
</dbReference>
<dbReference type="Gene3D" id="1.10.1030.10">
    <property type="entry name" value="Carbamoyl-phosphate synthetase, large subunit oligomerisation domain"/>
    <property type="match status" value="1"/>
</dbReference>
<dbReference type="Gene3D" id="3.40.50.1380">
    <property type="entry name" value="Methylglyoxal synthase-like domain"/>
    <property type="match status" value="1"/>
</dbReference>
<dbReference type="HAMAP" id="MF_01210_A">
    <property type="entry name" value="CPSase_L_chain_A"/>
    <property type="match status" value="1"/>
</dbReference>
<dbReference type="HAMAP" id="MF_01210_B">
    <property type="entry name" value="CPSase_L_chain_B"/>
    <property type="match status" value="1"/>
</dbReference>
<dbReference type="InterPro" id="IPR011761">
    <property type="entry name" value="ATP-grasp"/>
</dbReference>
<dbReference type="InterPro" id="IPR006275">
    <property type="entry name" value="CarbamoylP_synth_lsu"/>
</dbReference>
<dbReference type="InterPro" id="IPR005480">
    <property type="entry name" value="CarbamoylP_synth_lsu_oligo"/>
</dbReference>
<dbReference type="InterPro" id="IPR036897">
    <property type="entry name" value="CarbamoylP_synth_lsu_oligo_sf"/>
</dbReference>
<dbReference type="InterPro" id="IPR005479">
    <property type="entry name" value="CbamoylP_synth_lsu-like_ATP-bd"/>
</dbReference>
<dbReference type="InterPro" id="IPR005483">
    <property type="entry name" value="CbamoylP_synth_lsu_CPSase_dom"/>
</dbReference>
<dbReference type="InterPro" id="IPR011607">
    <property type="entry name" value="MGS-like_dom"/>
</dbReference>
<dbReference type="InterPro" id="IPR036914">
    <property type="entry name" value="MGS-like_dom_sf"/>
</dbReference>
<dbReference type="InterPro" id="IPR033937">
    <property type="entry name" value="MGS_CPS_CarB"/>
</dbReference>
<dbReference type="InterPro" id="IPR016185">
    <property type="entry name" value="PreATP-grasp_dom_sf"/>
</dbReference>
<dbReference type="NCBIfam" id="TIGR01369">
    <property type="entry name" value="CPSaseII_lrg"/>
    <property type="match status" value="1"/>
</dbReference>
<dbReference type="NCBIfam" id="NF003671">
    <property type="entry name" value="PRK05294.1"/>
    <property type="match status" value="1"/>
</dbReference>
<dbReference type="NCBIfam" id="NF009455">
    <property type="entry name" value="PRK12815.1"/>
    <property type="match status" value="1"/>
</dbReference>
<dbReference type="PANTHER" id="PTHR11405:SF53">
    <property type="entry name" value="CARBAMOYL-PHOSPHATE SYNTHASE [AMMONIA], MITOCHONDRIAL"/>
    <property type="match status" value="1"/>
</dbReference>
<dbReference type="PANTHER" id="PTHR11405">
    <property type="entry name" value="CARBAMOYLTRANSFERASE FAMILY MEMBER"/>
    <property type="match status" value="1"/>
</dbReference>
<dbReference type="Pfam" id="PF02786">
    <property type="entry name" value="CPSase_L_D2"/>
    <property type="match status" value="2"/>
</dbReference>
<dbReference type="Pfam" id="PF02787">
    <property type="entry name" value="CPSase_L_D3"/>
    <property type="match status" value="1"/>
</dbReference>
<dbReference type="Pfam" id="PF02142">
    <property type="entry name" value="MGS"/>
    <property type="match status" value="1"/>
</dbReference>
<dbReference type="PRINTS" id="PR00098">
    <property type="entry name" value="CPSASE"/>
</dbReference>
<dbReference type="SMART" id="SM01096">
    <property type="entry name" value="CPSase_L_D3"/>
    <property type="match status" value="1"/>
</dbReference>
<dbReference type="SMART" id="SM00851">
    <property type="entry name" value="MGS"/>
    <property type="match status" value="1"/>
</dbReference>
<dbReference type="SUPFAM" id="SSF48108">
    <property type="entry name" value="Carbamoyl phosphate synthetase, large subunit connection domain"/>
    <property type="match status" value="1"/>
</dbReference>
<dbReference type="SUPFAM" id="SSF56059">
    <property type="entry name" value="Glutathione synthetase ATP-binding domain-like"/>
    <property type="match status" value="2"/>
</dbReference>
<dbReference type="SUPFAM" id="SSF52335">
    <property type="entry name" value="Methylglyoxal synthase-like"/>
    <property type="match status" value="1"/>
</dbReference>
<dbReference type="SUPFAM" id="SSF52440">
    <property type="entry name" value="PreATP-grasp domain"/>
    <property type="match status" value="2"/>
</dbReference>
<dbReference type="PROSITE" id="PS50975">
    <property type="entry name" value="ATP_GRASP"/>
    <property type="match status" value="2"/>
</dbReference>
<dbReference type="PROSITE" id="PS00866">
    <property type="entry name" value="CPSASE_1"/>
    <property type="match status" value="2"/>
</dbReference>
<dbReference type="PROSITE" id="PS00867">
    <property type="entry name" value="CPSASE_2"/>
    <property type="match status" value="2"/>
</dbReference>
<dbReference type="PROSITE" id="PS51855">
    <property type="entry name" value="MGS"/>
    <property type="match status" value="1"/>
</dbReference>
<keyword id="KW-0028">Amino-acid biosynthesis</keyword>
<keyword id="KW-0055">Arginine biosynthesis</keyword>
<keyword id="KW-0067">ATP-binding</keyword>
<keyword id="KW-0436">Ligase</keyword>
<keyword id="KW-0460">Magnesium</keyword>
<keyword id="KW-0464">Manganese</keyword>
<keyword id="KW-0479">Metal-binding</keyword>
<keyword id="KW-0547">Nucleotide-binding</keyword>
<keyword id="KW-0665">Pyrimidine biosynthesis</keyword>
<keyword id="KW-1185">Reference proteome</keyword>
<keyword id="KW-0677">Repeat</keyword>
<evidence type="ECO:0000250" key="1"/>
<evidence type="ECO:0000255" key="2">
    <source>
        <dbReference type="HAMAP-Rule" id="MF_01210"/>
    </source>
</evidence>
<name>CARB_PSEAE</name>
<proteinExistence type="inferred from homology"/>
<organism>
    <name type="scientific">Pseudomonas aeruginosa (strain ATCC 15692 / DSM 22644 / CIP 104116 / JCM 14847 / LMG 12228 / 1C / PRS 101 / PAO1)</name>
    <dbReference type="NCBI Taxonomy" id="208964"/>
    <lineage>
        <taxon>Bacteria</taxon>
        <taxon>Pseudomonadati</taxon>
        <taxon>Pseudomonadota</taxon>
        <taxon>Gammaproteobacteria</taxon>
        <taxon>Pseudomonadales</taxon>
        <taxon>Pseudomonadaceae</taxon>
        <taxon>Pseudomonas</taxon>
    </lineage>
</organism>
<sequence>MPKRTDIKSILILGAGPIVIGQACEFDYSGAQACKALREEGYRVILVNSNPATIMTDPAMADATYIEPIKWATVAKIIEKERPDALLPTMGGQTALNCALDLERHGVLEKFGVEMIGANADTIDKAEDRSRFDKAMKDIGLACPRSGIAHSMEEAYGVLEQVGFPCIIRPSFTMGGTGGGIAYNREEFEEICARGLDLSPTNELLIDESLIGWKEYEMEVVRDKKDNCIIVCSIENFDPMGVHTGDSITVAPAQTLTDKEYQIMRNASLAVLREIGVETGGSNVQFGICPNTGRMVVIEMNPRVSRSSALASKATGFPIAKIAAKLAVGYTLDELQNDITGGRTPASFEPAIDYVVTKIPRFAFEKFPKADARLTTQMKSVGEVMAIGRTFQESVQKALRGLEVGATGFDPKLDLNDPEADSILKRELTVPSAERVWYVADAFRAGKSVEEVFELTRIDEWFLVQIEDLVKDEEKVKTLGLSSIDRELMYKLKRKGFSDARLAKLLGVTEKNLRSHRHKLKVLPVYKRVDTCAAEFATDTAYMYSTYEEECEANPSSREKIMILGGGPNRIGQGIEFDYCCVHAALAMREDGYETIMVNCNPETVSTDYDTSDRLYFEPVTLEDVLEIVRVEQPKGVIVQYGGQTPLKLCRALEEAGVPIIGTSPDAIDRAEDRERFQQMVQRLNLRQPANATARSEDEALAASKAIGYPLVVRPSYVLGGRAMEIVYQEEELKRYMREAVQVSNDSPVLLDHFLNCAIEVDIDAVCDGEIVVIGAIMQHIEQAGVHSGDSACSLPPYSLPQHIQDEIREQVKKMALELGVVGLMNVQMAVQGEDIFVIEVNPRASRTVPFVSKCVGESLAKVAARVMAGKTLAEVGFTQEIIPPFFSVKEAVFPFAKFPGVDPILGPEMKSTGEVMGVGDSFAEAFAKAQLGASEILPTAGCAFISVREDDKPFAAQVAGDLVALGFEVVATAGTARVIEAAGLPVRRVNKVTEGRPHVVDMIKNDEVTLIINTTEGRQSIADSYSIRRNALQHKICCTTTIAGGQAICEALKFGPEKTVRRLQDLHAGIKA</sequence>
<accession>P38100</accession>
<accession>Q51430</accession>
<gene>
    <name evidence="2" type="primary">carB</name>
    <name type="ordered locus">PA4756</name>
</gene>
<protein>
    <recommendedName>
        <fullName evidence="2">Carbamoyl phosphate synthase large chain</fullName>
        <ecNumber evidence="2">6.3.4.16</ecNumber>
        <ecNumber evidence="2">6.3.5.5</ecNumber>
    </recommendedName>
    <alternativeName>
        <fullName evidence="2">Carbamoyl phosphate synthetase ammonia chain</fullName>
    </alternativeName>
</protein>
<comment type="function">
    <text evidence="2">Large subunit of the glutamine-dependent carbamoyl phosphate synthetase (CPSase). CPSase catalyzes the formation of carbamoyl phosphate from the ammonia moiety of glutamine, carbonate, and phosphate donated by ATP, constituting the first step of 2 biosynthetic pathways, one leading to arginine and/or urea and the other to pyrimidine nucleotides. The large subunit (synthetase) binds the substrates ammonia (free or transferred from glutamine from the small subunit), hydrogencarbonate and ATP and carries out an ATP-coupled ligase reaction, activating hydrogencarbonate by forming carboxy phosphate which reacts with ammonia to form carbamoyl phosphate.</text>
</comment>
<comment type="catalytic activity">
    <reaction evidence="2">
        <text>hydrogencarbonate + L-glutamine + 2 ATP + H2O = carbamoyl phosphate + L-glutamate + 2 ADP + phosphate + 2 H(+)</text>
        <dbReference type="Rhea" id="RHEA:18633"/>
        <dbReference type="ChEBI" id="CHEBI:15377"/>
        <dbReference type="ChEBI" id="CHEBI:15378"/>
        <dbReference type="ChEBI" id="CHEBI:17544"/>
        <dbReference type="ChEBI" id="CHEBI:29985"/>
        <dbReference type="ChEBI" id="CHEBI:30616"/>
        <dbReference type="ChEBI" id="CHEBI:43474"/>
        <dbReference type="ChEBI" id="CHEBI:58228"/>
        <dbReference type="ChEBI" id="CHEBI:58359"/>
        <dbReference type="ChEBI" id="CHEBI:456216"/>
        <dbReference type="EC" id="6.3.5.5"/>
    </reaction>
</comment>
<comment type="catalytic activity">
    <molecule>Carbamoyl phosphate synthase large chain</molecule>
    <reaction evidence="2">
        <text>hydrogencarbonate + NH4(+) + 2 ATP = carbamoyl phosphate + 2 ADP + phosphate + 2 H(+)</text>
        <dbReference type="Rhea" id="RHEA:18029"/>
        <dbReference type="ChEBI" id="CHEBI:15378"/>
        <dbReference type="ChEBI" id="CHEBI:17544"/>
        <dbReference type="ChEBI" id="CHEBI:28938"/>
        <dbReference type="ChEBI" id="CHEBI:30616"/>
        <dbReference type="ChEBI" id="CHEBI:43474"/>
        <dbReference type="ChEBI" id="CHEBI:58228"/>
        <dbReference type="ChEBI" id="CHEBI:456216"/>
        <dbReference type="EC" id="6.3.4.16"/>
    </reaction>
</comment>
<comment type="cofactor">
    <cofactor evidence="2">
        <name>Mg(2+)</name>
        <dbReference type="ChEBI" id="CHEBI:18420"/>
    </cofactor>
    <cofactor evidence="2">
        <name>Mn(2+)</name>
        <dbReference type="ChEBI" id="CHEBI:29035"/>
    </cofactor>
    <text evidence="2">Binds 4 Mg(2+) or Mn(2+) ions per subunit.</text>
</comment>
<comment type="pathway">
    <text evidence="2">Amino-acid biosynthesis; L-arginine biosynthesis; carbamoyl phosphate from bicarbonate: step 1/1.</text>
</comment>
<comment type="pathway">
    <text evidence="2">Pyrimidine metabolism; UMP biosynthesis via de novo pathway; (S)-dihydroorotate from bicarbonate: step 1/3.</text>
</comment>
<comment type="subunit">
    <text evidence="2">Composed of two chains; the small (or glutamine) chain promotes the hydrolysis of glutamine to ammonia, which is used by the large (or ammonia) chain to synthesize carbamoyl phosphate. Tetramer of heterodimers (alpha,beta)4.</text>
</comment>
<comment type="domain">
    <text evidence="2">The large subunit is composed of 2 ATP-grasp domains that are involved in binding the 2 ATP molecules needed for carbamoyl phosphate synthesis. The N-terminal ATP-grasp domain (referred to as the carboxyphosphate synthetic component) catalyzes the ATP-dependent phosphorylation of hydrogencarbonate to carboxyphosphate and the subsequent nucleophilic attack by ammonia to form a carbamate intermediate. The C-terminal ATP-grasp domain (referred to as the carbamoyl phosphate synthetic component) then catalyzes the phosphorylation of carbamate with the second ATP to form the end product carbamoyl phosphate. The reactive and unstable enzyme intermediates are sequentially channeled from one active site to the next through the interior of the protein over a distance of at least 96 A.</text>
</comment>
<comment type="similarity">
    <text evidence="2">Belongs to the CarB family.</text>
</comment>
<feature type="initiator methionine" description="Removed" evidence="1">
    <location>
        <position position="1"/>
    </location>
</feature>
<feature type="chain" id="PRO_0000145028" description="Carbamoyl phosphate synthase large chain">
    <location>
        <begin position="2"/>
        <end position="1073"/>
    </location>
</feature>
<feature type="domain" description="ATP-grasp 1" evidence="2">
    <location>
        <begin position="133"/>
        <end position="328"/>
    </location>
</feature>
<feature type="domain" description="ATP-grasp 2" evidence="2">
    <location>
        <begin position="678"/>
        <end position="869"/>
    </location>
</feature>
<feature type="domain" description="MGS-like" evidence="2">
    <location>
        <begin position="936"/>
        <end position="1073"/>
    </location>
</feature>
<feature type="region of interest" description="Carboxyphosphate synthetic domain" evidence="2">
    <location>
        <begin position="2"/>
        <end position="403"/>
    </location>
</feature>
<feature type="region of interest" description="Oligomerization domain" evidence="2">
    <location>
        <begin position="404"/>
        <end position="553"/>
    </location>
</feature>
<feature type="region of interest" description="Carbamoyl phosphate synthetic domain" evidence="2">
    <location>
        <begin position="554"/>
        <end position="935"/>
    </location>
</feature>
<feature type="region of interest" description="Allosteric domain" evidence="2">
    <location>
        <begin position="936"/>
        <end position="1073"/>
    </location>
</feature>
<feature type="binding site" evidence="2">
    <location>
        <position position="129"/>
    </location>
    <ligand>
        <name>ATP</name>
        <dbReference type="ChEBI" id="CHEBI:30616"/>
        <label>1</label>
    </ligand>
</feature>
<feature type="binding site" evidence="2">
    <location>
        <position position="169"/>
    </location>
    <ligand>
        <name>ATP</name>
        <dbReference type="ChEBI" id="CHEBI:30616"/>
        <label>1</label>
    </ligand>
</feature>
<feature type="binding site" evidence="2">
    <location>
        <position position="175"/>
    </location>
    <ligand>
        <name>ATP</name>
        <dbReference type="ChEBI" id="CHEBI:30616"/>
        <label>1</label>
    </ligand>
</feature>
<feature type="binding site" evidence="2">
    <location>
        <position position="176"/>
    </location>
    <ligand>
        <name>ATP</name>
        <dbReference type="ChEBI" id="CHEBI:30616"/>
        <label>1</label>
    </ligand>
</feature>
<feature type="binding site" evidence="2">
    <location>
        <position position="208"/>
    </location>
    <ligand>
        <name>ATP</name>
        <dbReference type="ChEBI" id="CHEBI:30616"/>
        <label>1</label>
    </ligand>
</feature>
<feature type="binding site" evidence="2">
    <location>
        <position position="210"/>
    </location>
    <ligand>
        <name>ATP</name>
        <dbReference type="ChEBI" id="CHEBI:30616"/>
        <label>1</label>
    </ligand>
</feature>
<feature type="binding site" evidence="2">
    <location>
        <position position="215"/>
    </location>
    <ligand>
        <name>ATP</name>
        <dbReference type="ChEBI" id="CHEBI:30616"/>
        <label>1</label>
    </ligand>
</feature>
<feature type="binding site" evidence="2">
    <location>
        <position position="241"/>
    </location>
    <ligand>
        <name>ATP</name>
        <dbReference type="ChEBI" id="CHEBI:30616"/>
        <label>1</label>
    </ligand>
</feature>
<feature type="binding site" evidence="2">
    <location>
        <position position="242"/>
    </location>
    <ligand>
        <name>ATP</name>
        <dbReference type="ChEBI" id="CHEBI:30616"/>
        <label>1</label>
    </ligand>
</feature>
<feature type="binding site" evidence="2">
    <location>
        <position position="243"/>
    </location>
    <ligand>
        <name>ATP</name>
        <dbReference type="ChEBI" id="CHEBI:30616"/>
        <label>1</label>
    </ligand>
</feature>
<feature type="binding site" evidence="2">
    <location>
        <position position="285"/>
    </location>
    <ligand>
        <name>ATP</name>
        <dbReference type="ChEBI" id="CHEBI:30616"/>
        <label>1</label>
    </ligand>
</feature>
<feature type="binding site" evidence="2">
    <location>
        <position position="285"/>
    </location>
    <ligand>
        <name>Mg(2+)</name>
        <dbReference type="ChEBI" id="CHEBI:18420"/>
        <label>1</label>
    </ligand>
</feature>
<feature type="binding site" evidence="2">
    <location>
        <position position="285"/>
    </location>
    <ligand>
        <name>Mn(2+)</name>
        <dbReference type="ChEBI" id="CHEBI:29035"/>
        <label>1</label>
    </ligand>
</feature>
<feature type="binding site" evidence="2">
    <location>
        <position position="299"/>
    </location>
    <ligand>
        <name>ATP</name>
        <dbReference type="ChEBI" id="CHEBI:30616"/>
        <label>1</label>
    </ligand>
</feature>
<feature type="binding site" evidence="2">
    <location>
        <position position="299"/>
    </location>
    <ligand>
        <name>Mg(2+)</name>
        <dbReference type="ChEBI" id="CHEBI:18420"/>
        <label>1</label>
    </ligand>
</feature>
<feature type="binding site" evidence="2">
    <location>
        <position position="299"/>
    </location>
    <ligand>
        <name>Mg(2+)</name>
        <dbReference type="ChEBI" id="CHEBI:18420"/>
        <label>2</label>
    </ligand>
</feature>
<feature type="binding site" evidence="2">
    <location>
        <position position="299"/>
    </location>
    <ligand>
        <name>Mn(2+)</name>
        <dbReference type="ChEBI" id="CHEBI:29035"/>
        <label>1</label>
    </ligand>
</feature>
<feature type="binding site" evidence="2">
    <location>
        <position position="299"/>
    </location>
    <ligand>
        <name>Mn(2+)</name>
        <dbReference type="ChEBI" id="CHEBI:29035"/>
        <label>2</label>
    </ligand>
</feature>
<feature type="binding site" evidence="2">
    <location>
        <position position="301"/>
    </location>
    <ligand>
        <name>Mg(2+)</name>
        <dbReference type="ChEBI" id="CHEBI:18420"/>
        <label>2</label>
    </ligand>
</feature>
<feature type="binding site" evidence="2">
    <location>
        <position position="301"/>
    </location>
    <ligand>
        <name>Mn(2+)</name>
        <dbReference type="ChEBI" id="CHEBI:29035"/>
        <label>2</label>
    </ligand>
</feature>
<feature type="binding site" evidence="2">
    <location>
        <position position="714"/>
    </location>
    <ligand>
        <name>ATP</name>
        <dbReference type="ChEBI" id="CHEBI:30616"/>
        <label>2</label>
    </ligand>
</feature>
<feature type="binding site" evidence="2">
    <location>
        <position position="753"/>
    </location>
    <ligand>
        <name>ATP</name>
        <dbReference type="ChEBI" id="CHEBI:30616"/>
        <label>2</label>
    </ligand>
</feature>
<feature type="binding site" evidence="2">
    <location>
        <position position="755"/>
    </location>
    <ligand>
        <name>ATP</name>
        <dbReference type="ChEBI" id="CHEBI:30616"/>
        <label>2</label>
    </ligand>
</feature>
<feature type="binding site" evidence="2">
    <location>
        <position position="760"/>
    </location>
    <ligand>
        <name>ATP</name>
        <dbReference type="ChEBI" id="CHEBI:30616"/>
        <label>2</label>
    </ligand>
</feature>
<feature type="binding site" evidence="2">
    <location>
        <position position="785"/>
    </location>
    <ligand>
        <name>ATP</name>
        <dbReference type="ChEBI" id="CHEBI:30616"/>
        <label>2</label>
    </ligand>
</feature>
<feature type="binding site" evidence="2">
    <location>
        <position position="786"/>
    </location>
    <ligand>
        <name>ATP</name>
        <dbReference type="ChEBI" id="CHEBI:30616"/>
        <label>2</label>
    </ligand>
</feature>
<feature type="binding site" evidence="2">
    <location>
        <position position="787"/>
    </location>
    <ligand>
        <name>ATP</name>
        <dbReference type="ChEBI" id="CHEBI:30616"/>
        <label>2</label>
    </ligand>
</feature>
<feature type="binding site" evidence="2">
    <location>
        <position position="788"/>
    </location>
    <ligand>
        <name>ATP</name>
        <dbReference type="ChEBI" id="CHEBI:30616"/>
        <label>2</label>
    </ligand>
</feature>
<feature type="binding site" evidence="2">
    <location>
        <position position="828"/>
    </location>
    <ligand>
        <name>ATP</name>
        <dbReference type="ChEBI" id="CHEBI:30616"/>
        <label>2</label>
    </ligand>
</feature>
<feature type="binding site" evidence="2">
    <location>
        <position position="828"/>
    </location>
    <ligand>
        <name>Mg(2+)</name>
        <dbReference type="ChEBI" id="CHEBI:18420"/>
        <label>3</label>
    </ligand>
</feature>
<feature type="binding site" evidence="2">
    <location>
        <position position="828"/>
    </location>
    <ligand>
        <name>Mn(2+)</name>
        <dbReference type="ChEBI" id="CHEBI:29035"/>
        <label>3</label>
    </ligand>
</feature>
<feature type="binding site" evidence="2">
    <location>
        <position position="840"/>
    </location>
    <ligand>
        <name>ATP</name>
        <dbReference type="ChEBI" id="CHEBI:30616"/>
        <label>2</label>
    </ligand>
</feature>
<feature type="binding site" evidence="2">
    <location>
        <position position="840"/>
    </location>
    <ligand>
        <name>Mg(2+)</name>
        <dbReference type="ChEBI" id="CHEBI:18420"/>
        <label>3</label>
    </ligand>
</feature>
<feature type="binding site" evidence="2">
    <location>
        <position position="840"/>
    </location>
    <ligand>
        <name>Mg(2+)</name>
        <dbReference type="ChEBI" id="CHEBI:18420"/>
        <label>4</label>
    </ligand>
</feature>
<feature type="binding site" evidence="2">
    <location>
        <position position="840"/>
    </location>
    <ligand>
        <name>Mn(2+)</name>
        <dbReference type="ChEBI" id="CHEBI:29035"/>
        <label>3</label>
    </ligand>
</feature>
<feature type="binding site" evidence="2">
    <location>
        <position position="840"/>
    </location>
    <ligand>
        <name>Mn(2+)</name>
        <dbReference type="ChEBI" id="CHEBI:29035"/>
        <label>4</label>
    </ligand>
</feature>
<feature type="binding site" evidence="2">
    <location>
        <position position="842"/>
    </location>
    <ligand>
        <name>Mg(2+)</name>
        <dbReference type="ChEBI" id="CHEBI:18420"/>
        <label>4</label>
    </ligand>
</feature>
<feature type="binding site" evidence="2">
    <location>
        <position position="842"/>
    </location>
    <ligand>
        <name>Mn(2+)</name>
        <dbReference type="ChEBI" id="CHEBI:29035"/>
        <label>4</label>
    </ligand>
</feature>
<reference key="1">
    <citation type="journal article" date="1997" name="J. Bacteriol.">
        <title>Identification of greA encoding a transcriptional elongation factor as a member of the carA-orf-carB-greA operon in Pseudomonas aeruginosa PAO1.</title>
        <authorList>
            <person name="Lu C.-D."/>
            <person name="Kwon D.-H."/>
            <person name="Abdelal A.T."/>
        </authorList>
    </citation>
    <scope>NUCLEOTIDE SEQUENCE [GENOMIC DNA]</scope>
    <source>
        <strain>ATCC 15692 / DSM 22644 / CIP 104116 / JCM 14847 / LMG 12228 / 1C / PRS 101 / PAO1</strain>
    </source>
</reference>
<reference key="2">
    <citation type="journal article" date="2000" name="Nature">
        <title>Complete genome sequence of Pseudomonas aeruginosa PAO1, an opportunistic pathogen.</title>
        <authorList>
            <person name="Stover C.K."/>
            <person name="Pham X.-Q.T."/>
            <person name="Erwin A.L."/>
            <person name="Mizoguchi S.D."/>
            <person name="Warrener P."/>
            <person name="Hickey M.J."/>
            <person name="Brinkman F.S.L."/>
            <person name="Hufnagle W.O."/>
            <person name="Kowalik D.J."/>
            <person name="Lagrou M."/>
            <person name="Garber R.L."/>
            <person name="Goltry L."/>
            <person name="Tolentino E."/>
            <person name="Westbrock-Wadman S."/>
            <person name="Yuan Y."/>
            <person name="Brody L.L."/>
            <person name="Coulter S.N."/>
            <person name="Folger K.R."/>
            <person name="Kas A."/>
            <person name="Larbig K."/>
            <person name="Lim R.M."/>
            <person name="Smith K.A."/>
            <person name="Spencer D.H."/>
            <person name="Wong G.K.-S."/>
            <person name="Wu Z."/>
            <person name="Paulsen I.T."/>
            <person name="Reizer J."/>
            <person name="Saier M.H. Jr."/>
            <person name="Hancock R.E.W."/>
            <person name="Lory S."/>
            <person name="Olson M.V."/>
        </authorList>
    </citation>
    <scope>NUCLEOTIDE SEQUENCE [LARGE SCALE GENOMIC DNA]</scope>
    <source>
        <strain>ATCC 15692 / DSM 22644 / CIP 104116 / JCM 14847 / LMG 12228 / 1C / PRS 101 / PAO1</strain>
    </source>
</reference>
<reference key="3">
    <citation type="journal article" date="1994" name="J. Bacteriol.">
        <title>Structure and regulation of the carAB operon in Pseudomonas aeruginosa and Pseudomonas stutzeri: no untranslated region exists.</title>
        <authorList>
            <person name="Kwon D.-H."/>
            <person name="Lu C.-D."/>
            <person name="Walthall D.A."/>
            <person name="Brown T.M."/>
            <person name="Houghton J.E."/>
            <person name="Abdelal A.T."/>
        </authorList>
    </citation>
    <scope>NUCLEOTIDE SEQUENCE [GENOMIC DNA] OF 1-26</scope>
    <source>
        <strain>ATCC 15692 / DSM 22644 / CIP 104116 / JCM 14847 / LMG 12228 / 1C / PRS 101 / PAO1</strain>
    </source>
</reference>
<reference key="4">
    <citation type="journal article" date="1990" name="J. Bacteriol.">
        <title>Unorthodox expression of an enzyme: evidence for an untranslated region within carA from Pseudomonas aeruginosa.</title>
        <authorList>
            <person name="Wong S.C."/>
            <person name="Abdelal A.T."/>
        </authorList>
    </citation>
    <scope>NUCLEOTIDE SEQUENCE [GENOMIC DNA] OF 1-17</scope>
</reference>